<reference key="1">
    <citation type="journal article" date="1986" name="Nucleic Acids Res.">
        <title>The cloning and nucleotide sequence of cDNA for an amplified glutamine synthetase gene from the Chinese hamster.</title>
        <authorList>
            <person name="Hayward B.E."/>
            <person name="Hussain A."/>
            <person name="Wilson R.H."/>
            <person name="Lyons A."/>
            <person name="Woodcock V."/>
            <person name="McIntosh B."/>
            <person name="Harris T.J.R."/>
        </authorList>
    </citation>
    <scope>NUCLEOTIDE SEQUENCE [MRNA]</scope>
    <source>
        <tissue>Ovary</tissue>
    </source>
</reference>
<reference key="2">
    <citation type="submission" date="1999-05" db="EMBL/GenBank/DDBJ databases">
        <authorList>
            <person name="Tong Y."/>
            <person name="Wang H."/>
        </authorList>
    </citation>
    <scope>NUCLEOTIDE SEQUENCE [MRNA]</scope>
</reference>
<comment type="function">
    <text evidence="2 3">Glutamine synthetase that catalyzes the ATP-dependent conversion of glutamate and ammonia to glutamine. Its role depends on tissue localization: in the brain, it regulates the levels of toxic ammonia and converts neurotoxic glutamate to harmless glutamine, whereas in the liver, it is one of the enzymes responsible for the removal of ammonia. Plays a key role in ammonium detoxification during erythropoiesis: the glutamine synthetase activity is required to remove ammonium generated by porphobilinogen deaminase (HMBS) during heme biosynthesis to prevent ammonium accumulation and oxidative stress (By similarity). Essential for proliferation of fetal skin fibroblasts (By similarity). Independently of its glutamine synthetase activity, required for endothelial cell migration during vascular development (By similarity). Involved in angiogenesis by regulating membrane localization and activation of the GTPase RHOJ, possibly by promoting RHOJ palmitoylation. May act as a palmitoyltransferase for RHOJ: able to autopalmitoylate and then transfer the palmitoyl group to RHOJ. Plays a role in ribosomal 40S subunit biogenesis. Through the interaction with BEST2, inhibits BEST2 channel activity by affecting the gating at the aperture in the absence of intracellular L-glutamate, but sensitizes BEST2 to intracellular L-glutamate, which promotes the opening of BEST2 and thus relieves its inhibitory effect on BEST2 (By similarity).</text>
</comment>
<comment type="catalytic activity">
    <reaction evidence="2">
        <text>L-glutamate + NH4(+) + ATP = L-glutamine + ADP + phosphate + H(+)</text>
        <dbReference type="Rhea" id="RHEA:16169"/>
        <dbReference type="ChEBI" id="CHEBI:15378"/>
        <dbReference type="ChEBI" id="CHEBI:28938"/>
        <dbReference type="ChEBI" id="CHEBI:29985"/>
        <dbReference type="ChEBI" id="CHEBI:30616"/>
        <dbReference type="ChEBI" id="CHEBI:43474"/>
        <dbReference type="ChEBI" id="CHEBI:58359"/>
        <dbReference type="ChEBI" id="CHEBI:456216"/>
        <dbReference type="EC" id="6.3.1.2"/>
    </reaction>
</comment>
<comment type="catalytic activity">
    <reaction evidence="2">
        <text>L-cysteinyl-[protein] + hexadecanoyl-CoA = S-hexadecanoyl-L-cysteinyl-[protein] + CoA</text>
        <dbReference type="Rhea" id="RHEA:36683"/>
        <dbReference type="Rhea" id="RHEA-COMP:10131"/>
        <dbReference type="Rhea" id="RHEA-COMP:11032"/>
        <dbReference type="ChEBI" id="CHEBI:29950"/>
        <dbReference type="ChEBI" id="CHEBI:57287"/>
        <dbReference type="ChEBI" id="CHEBI:57379"/>
        <dbReference type="ChEBI" id="CHEBI:74151"/>
        <dbReference type="EC" id="2.3.1.225"/>
    </reaction>
</comment>
<comment type="cofactor">
    <cofactor evidence="1">
        <name>Mg(2+)</name>
        <dbReference type="ChEBI" id="CHEBI:18420"/>
    </cofactor>
    <cofactor evidence="2">
        <name>Mn(2+)</name>
        <dbReference type="ChEBI" id="CHEBI:29035"/>
    </cofactor>
</comment>
<comment type="activity regulation">
    <text evidence="2">Glutamine synthetase activity is inhibited by methionine sulfoximine (MSO).</text>
</comment>
<comment type="subunit">
    <text evidence="2 3">Decamer; composed of two pentamers (By similarity). Interacts with PALMD (By similarity). Interacts with RHOJ (By similarity). Interacts with BEST2; this interaction tethers a fraction of GLUL to the membrane, causing a decrease of cytosolic glutamine synthase (GS) activity and inhibits the chloride channel activity of BEST2 by affecting the gating at the aperture in the absence of intracellular glutamate (By similarity).</text>
</comment>
<comment type="subcellular location">
    <subcellularLocation>
        <location evidence="2">Cytoplasm</location>
        <location evidence="2">Cytosol</location>
    </subcellularLocation>
    <subcellularLocation>
        <location evidence="1">Microsome</location>
    </subcellularLocation>
    <subcellularLocation>
        <location evidence="1">Mitochondrion</location>
    </subcellularLocation>
    <subcellularLocation>
        <location evidence="2">Cell membrane</location>
        <topology evidence="2">Lipid-anchor</topology>
    </subcellularLocation>
    <text evidence="2">Mainly localizes in the cytosol, with a fraction associated with the cell membrane.</text>
</comment>
<comment type="PTM">
    <text evidence="2">Palmitoylated; undergoes autopalmitoylation.</text>
</comment>
<comment type="PTM">
    <text evidence="2">Acetylated by EP300/p300; acetylation is stimulated by increased glutamine levels and promotes ubiquitin-mediated proteasomal degradation.</text>
</comment>
<comment type="PTM">
    <text evidence="2 3">Ubiquitinated by ZNRF1 (By similarity). Ubiquitinated by the DCX (DDB1-CUL4-X-box) E3 ubiquitin-protein ligase complex called CRL4(CRBN), leading to proteasomal degradation (By similarity).</text>
</comment>
<comment type="similarity">
    <text evidence="8">Belongs to the glutamine synthetase family.</text>
</comment>
<organism>
    <name type="scientific">Cricetulus griseus</name>
    <name type="common">Chinese hamster</name>
    <name type="synonym">Cricetulus barabensis griseus</name>
    <dbReference type="NCBI Taxonomy" id="10029"/>
    <lineage>
        <taxon>Eukaryota</taxon>
        <taxon>Metazoa</taxon>
        <taxon>Chordata</taxon>
        <taxon>Craniata</taxon>
        <taxon>Vertebrata</taxon>
        <taxon>Euteleostomi</taxon>
        <taxon>Mammalia</taxon>
        <taxon>Eutheria</taxon>
        <taxon>Euarchontoglires</taxon>
        <taxon>Glires</taxon>
        <taxon>Rodentia</taxon>
        <taxon>Myomorpha</taxon>
        <taxon>Muroidea</taxon>
        <taxon>Cricetidae</taxon>
        <taxon>Cricetinae</taxon>
        <taxon>Cricetulus</taxon>
    </lineage>
</organism>
<proteinExistence type="evidence at transcript level"/>
<feature type="initiator methionine" description="Removed" evidence="3">
    <location>
        <position position="1"/>
    </location>
</feature>
<feature type="chain" id="PRO_0000153138" description="Glutamine synthetase">
    <location>
        <begin position="2"/>
        <end position="373"/>
    </location>
</feature>
<feature type="domain" description="GS beta-grasp" evidence="5">
    <location>
        <begin position="24"/>
        <end position="106"/>
    </location>
</feature>
<feature type="domain" description="GS catalytic" evidence="6">
    <location>
        <begin position="113"/>
        <end position="373"/>
    </location>
</feature>
<feature type="region of interest" description="Required for glutamine-induced ubiquitination by CRL4(CRBN) and proteasomal degradation" evidence="2">
    <location>
        <begin position="2"/>
        <end position="25"/>
    </location>
</feature>
<feature type="binding site" evidence="2">
    <location>
        <position position="134"/>
    </location>
    <ligand>
        <name>ATP</name>
        <dbReference type="ChEBI" id="CHEBI:30616"/>
    </ligand>
</feature>
<feature type="binding site" evidence="2">
    <location>
        <position position="134"/>
    </location>
    <ligand>
        <name>Mn(2+)</name>
        <dbReference type="ChEBI" id="CHEBI:29035"/>
        <label>1</label>
    </ligand>
</feature>
<feature type="binding site" evidence="2">
    <location>
        <position position="136"/>
    </location>
    <ligand>
        <name>Mn(2+)</name>
        <dbReference type="ChEBI" id="CHEBI:29035"/>
        <label>2</label>
    </ligand>
</feature>
<feature type="binding site" evidence="2">
    <location>
        <position position="196"/>
    </location>
    <ligand>
        <name>Mn(2+)</name>
        <dbReference type="ChEBI" id="CHEBI:29035"/>
        <label>2</label>
    </ligand>
</feature>
<feature type="binding site" evidence="2">
    <location>
        <begin position="203"/>
        <end position="208"/>
    </location>
    <ligand>
        <name>ATP</name>
        <dbReference type="ChEBI" id="CHEBI:30616"/>
    </ligand>
</feature>
<feature type="binding site" evidence="2">
    <location>
        <position position="203"/>
    </location>
    <ligand>
        <name>Mn(2+)</name>
        <dbReference type="ChEBI" id="CHEBI:29035"/>
        <label>2</label>
    </ligand>
</feature>
<feature type="binding site" evidence="4">
    <location>
        <begin position="246"/>
        <end position="247"/>
    </location>
    <ligand>
        <name>L-glutamate</name>
        <dbReference type="ChEBI" id="CHEBI:29985"/>
    </ligand>
</feature>
<feature type="binding site" evidence="2">
    <location>
        <position position="253"/>
    </location>
    <ligand>
        <name>Mn(2+)</name>
        <dbReference type="ChEBI" id="CHEBI:29035"/>
        <label>1</label>
    </ligand>
</feature>
<feature type="binding site" evidence="2">
    <location>
        <begin position="255"/>
        <end position="257"/>
    </location>
    <ligand>
        <name>ATP</name>
        <dbReference type="ChEBI" id="CHEBI:30616"/>
    </ligand>
</feature>
<feature type="binding site" evidence="2">
    <location>
        <position position="319"/>
    </location>
    <ligand>
        <name>ATP</name>
        <dbReference type="ChEBI" id="CHEBI:30616"/>
    </ligand>
</feature>
<feature type="binding site" evidence="4">
    <location>
        <position position="319"/>
    </location>
    <ligand>
        <name>L-glutamate</name>
        <dbReference type="ChEBI" id="CHEBI:29985"/>
    </ligand>
</feature>
<feature type="binding site" evidence="2">
    <location>
        <position position="324"/>
    </location>
    <ligand>
        <name>ATP</name>
        <dbReference type="ChEBI" id="CHEBI:30616"/>
    </ligand>
</feature>
<feature type="binding site" evidence="2">
    <location>
        <begin position="336"/>
        <end position="338"/>
    </location>
    <ligand>
        <name>ADP</name>
        <dbReference type="ChEBI" id="CHEBI:456216"/>
    </ligand>
</feature>
<feature type="binding site" evidence="2">
    <location>
        <position position="338"/>
    </location>
    <ligand>
        <name>Mn(2+)</name>
        <dbReference type="ChEBI" id="CHEBI:29035"/>
        <label>1</label>
    </ligand>
</feature>
<feature type="binding site" evidence="4">
    <location>
        <position position="340"/>
    </location>
    <ligand>
        <name>L-glutamate</name>
        <dbReference type="ChEBI" id="CHEBI:29985"/>
    </ligand>
</feature>
<feature type="modified residue" description="N-acetylalanine" evidence="3">
    <location>
        <position position="2"/>
    </location>
</feature>
<feature type="modified residue" description="N6-acetyllysine" evidence="2">
    <location>
        <position position="11"/>
    </location>
</feature>
<feature type="modified residue" description="N6-acetyllysine" evidence="2">
    <location>
        <position position="14"/>
    </location>
</feature>
<feature type="modified residue" description="Phosphotyrosine" evidence="3">
    <location>
        <position position="104"/>
    </location>
</feature>
<feature type="modified residue" description="Phosphoserine" evidence="2">
    <location>
        <position position="343"/>
    </location>
</feature>
<feature type="sequence conflict" description="In Ref. 2; CAA27211." evidence="8" ref="2">
    <original>G</original>
    <variation>N</variation>
    <location>
        <position position="12"/>
    </location>
</feature>
<feature type="sequence conflict" description="In Ref. 2; CAA27211." evidence="8" ref="2">
    <original>MS</original>
    <variation>LC</variation>
    <location>
        <begin position="18"/>
        <end position="19"/>
    </location>
</feature>
<feature type="sequence conflict" description="In Ref. 2; CAA27211." evidence="8" ref="2">
    <original>S</original>
    <variation>G</variation>
    <location>
        <position position="72"/>
    </location>
</feature>
<feature type="sequence conflict" description="In Ref. 2; CAA27211." evidence="8" ref="2">
    <original>KE</original>
    <variation>RD</variation>
    <location>
        <begin position="91"/>
        <end position="92"/>
    </location>
</feature>
<feature type="sequence conflict" description="In Ref. 2; CAA27211." evidence="8" ref="2">
    <original>Q</original>
    <variation>R</variation>
    <location>
        <position position="106"/>
    </location>
</feature>
<feature type="sequence conflict" description="In Ref. 2; CAA27211." evidence="8" ref="2">
    <original>T</original>
    <variation>S</variation>
    <location>
        <position position="116"/>
    </location>
</feature>
<feature type="sequence conflict" description="In Ref. 2; CAA27211." evidence="8" ref="2">
    <original>L</original>
    <variation>M</variation>
    <location>
        <position position="140"/>
    </location>
</feature>
<feature type="sequence conflict" description="In Ref. 2; CAA27211." evidence="8" ref="2">
    <original>D</original>
    <variation>N</variation>
    <location>
        <position position="152"/>
    </location>
</feature>
<feature type="sequence conflict" description="In Ref. 2; CAA27211." evidence="8" ref="2">
    <original>L</original>
    <variation>P</variation>
    <location>
        <position position="160"/>
    </location>
</feature>
<feature type="sequence conflict" description="In Ref. 2; CAA27211." evidence="8" ref="2">
    <original>R</original>
    <variation>G</variation>
    <location>
        <position position="172"/>
    </location>
</feature>
<feature type="sequence conflict" description="In Ref. 2; CAA27211." evidence="8" ref="2">
    <original>M</original>
    <variation>V</variation>
    <location>
        <position position="176"/>
    </location>
</feature>
<feature type="sequence conflict" description="In Ref. 2; CAA27211." evidence="8" ref="2">
    <original>Y</original>
    <variation>N</variation>
    <location>
        <position position="194"/>
    </location>
</feature>
<feature type="sequence conflict" description="In Ref. 2; CAA27211." evidence="8" ref="2">
    <original>KH</original>
    <variation>MP</variation>
    <location>
        <begin position="198"/>
        <end position="199"/>
    </location>
</feature>
<feature type="sequence conflict" description="In Ref. 2; CAA27211." evidence="8" ref="2">
    <original>K</original>
    <variation>E</variation>
    <location>
        <position position="230"/>
    </location>
</feature>
<feature type="sequence conflict" description="In Ref. 2; CAA27211." evidence="8" ref="2">
    <original>S</original>
    <variation>P</variation>
    <location>
        <position position="240"/>
    </location>
</feature>
<feature type="sequence conflict" description="In Ref. 2; CAA27211." evidence="8" ref="2">
    <original>T</original>
    <variation>A</variation>
    <location>
        <position position="260"/>
    </location>
</feature>
<feature type="sequence conflict" description="In Ref. 2; CAA27211." evidence="8" ref="2">
    <original>K</original>
    <variation>E</variation>
    <location>
        <position position="271"/>
    </location>
</feature>
<feature type="sequence conflict" description="In Ref. 2; CAA27211." evidence="8" ref="2">
    <original>R</original>
    <variation>G</variation>
    <location>
        <position position="299"/>
    </location>
</feature>
<feature type="sequence conflict" description="In Ref. 2; CAA27211." evidence="8" ref="2">
    <original>K</original>
    <variation>E</variation>
    <location>
        <position position="305"/>
    </location>
</feature>
<feature type="sequence conflict" description="In Ref. 2; CAA27211." evidence="8" ref="2">
    <original>D</original>
    <variation>N</variation>
    <location>
        <position position="318"/>
    </location>
</feature>
<feature type="sequence conflict" description="In Ref. 2; CAA27211." evidence="8" ref="2">
    <original>ARC</original>
    <variation>DRR</variation>
    <location>
        <begin position="339"/>
        <end position="341"/>
    </location>
</feature>
<feature type="sequence conflict" description="In Ref. 2; CAA27211." evidence="8" ref="2">
    <original>Q</original>
    <variation>E</variation>
    <location>
        <position position="367"/>
    </location>
</feature>
<evidence type="ECO:0000250" key="1">
    <source>
        <dbReference type="UniProtKB" id="P09606"/>
    </source>
</evidence>
<evidence type="ECO:0000250" key="2">
    <source>
        <dbReference type="UniProtKB" id="P15104"/>
    </source>
</evidence>
<evidence type="ECO:0000250" key="3">
    <source>
        <dbReference type="UniProtKB" id="P15105"/>
    </source>
</evidence>
<evidence type="ECO:0000250" key="4">
    <source>
        <dbReference type="UniProtKB" id="P9WN39"/>
    </source>
</evidence>
<evidence type="ECO:0000255" key="5">
    <source>
        <dbReference type="PROSITE-ProRule" id="PRU01330"/>
    </source>
</evidence>
<evidence type="ECO:0000255" key="6">
    <source>
        <dbReference type="PROSITE-ProRule" id="PRU01331"/>
    </source>
</evidence>
<evidence type="ECO:0000303" key="7">
    <source>
    </source>
</evidence>
<evidence type="ECO:0000305" key="8"/>
<dbReference type="EC" id="6.3.1.2" evidence="2"/>
<dbReference type="EC" id="2.3.1.225" evidence="2"/>
<dbReference type="EMBL" id="X03495">
    <property type="protein sequence ID" value="CAA27211.1"/>
    <property type="molecule type" value="mRNA"/>
</dbReference>
<dbReference type="EMBL" id="AF150961">
    <property type="protein sequence ID" value="AAG43362.1"/>
    <property type="molecule type" value="mRNA"/>
</dbReference>
<dbReference type="RefSeq" id="NP_001233699.1">
    <property type="nucleotide sequence ID" value="NM_001246770.1"/>
</dbReference>
<dbReference type="SMR" id="P04773"/>
<dbReference type="PaxDb" id="10029-NP_001233699.1"/>
<dbReference type="GeneID" id="100689337"/>
<dbReference type="KEGG" id="cge:100689337"/>
<dbReference type="eggNOG" id="KOG0683">
    <property type="taxonomic scope" value="Eukaryota"/>
</dbReference>
<dbReference type="OrthoDB" id="1936100at2759"/>
<dbReference type="Proteomes" id="UP000694386">
    <property type="component" value="Unplaced"/>
</dbReference>
<dbReference type="Proteomes" id="UP001108280">
    <property type="component" value="Chromosome 1"/>
</dbReference>
<dbReference type="GO" id="GO:0005829">
    <property type="term" value="C:cytosol"/>
    <property type="evidence" value="ECO:0000250"/>
    <property type="project" value="UniProtKB"/>
</dbReference>
<dbReference type="GO" id="GO:0005783">
    <property type="term" value="C:endoplasmic reticulum"/>
    <property type="evidence" value="ECO:0007669"/>
    <property type="project" value="UniProtKB-KW"/>
</dbReference>
<dbReference type="GO" id="GO:0005739">
    <property type="term" value="C:mitochondrion"/>
    <property type="evidence" value="ECO:0007669"/>
    <property type="project" value="UniProtKB-SubCell"/>
</dbReference>
<dbReference type="GO" id="GO:0005886">
    <property type="term" value="C:plasma membrane"/>
    <property type="evidence" value="ECO:0000250"/>
    <property type="project" value="UniProtKB"/>
</dbReference>
<dbReference type="GO" id="GO:0005524">
    <property type="term" value="F:ATP binding"/>
    <property type="evidence" value="ECO:0007669"/>
    <property type="project" value="UniProtKB-KW"/>
</dbReference>
<dbReference type="GO" id="GO:0004356">
    <property type="term" value="F:glutamine synthetase activity"/>
    <property type="evidence" value="ECO:0000250"/>
    <property type="project" value="UniProtKB"/>
</dbReference>
<dbReference type="GO" id="GO:0046872">
    <property type="term" value="F:metal ion binding"/>
    <property type="evidence" value="ECO:0007669"/>
    <property type="project" value="UniProtKB-KW"/>
</dbReference>
<dbReference type="GO" id="GO:0019706">
    <property type="term" value="F:protein-cysteine S-palmitoyltransferase activity"/>
    <property type="evidence" value="ECO:0000250"/>
    <property type="project" value="UniProtKB"/>
</dbReference>
<dbReference type="GO" id="GO:0001525">
    <property type="term" value="P:angiogenesis"/>
    <property type="evidence" value="ECO:0007669"/>
    <property type="project" value="UniProtKB-KW"/>
</dbReference>
<dbReference type="GO" id="GO:0006542">
    <property type="term" value="P:glutamine biosynthetic process"/>
    <property type="evidence" value="ECO:0007669"/>
    <property type="project" value="InterPro"/>
</dbReference>
<dbReference type="GO" id="GO:0097275">
    <property type="term" value="P:intracellular ammonium homeostasis"/>
    <property type="evidence" value="ECO:0000250"/>
    <property type="project" value="UniProtKB"/>
</dbReference>
<dbReference type="GO" id="GO:0045648">
    <property type="term" value="P:positive regulation of erythrocyte differentiation"/>
    <property type="evidence" value="ECO:0000250"/>
    <property type="project" value="UniProtKB"/>
</dbReference>
<dbReference type="GO" id="GO:0018345">
    <property type="term" value="P:protein palmitoylation"/>
    <property type="evidence" value="ECO:0000250"/>
    <property type="project" value="UniProtKB"/>
</dbReference>
<dbReference type="GO" id="GO:0010594">
    <property type="term" value="P:regulation of endothelial cell migration"/>
    <property type="evidence" value="ECO:0000250"/>
    <property type="project" value="UniProtKB"/>
</dbReference>
<dbReference type="GO" id="GO:1903670">
    <property type="term" value="P:regulation of sprouting angiogenesis"/>
    <property type="evidence" value="ECO:0000250"/>
    <property type="project" value="UniProtKB"/>
</dbReference>
<dbReference type="FunFam" id="3.10.20.70:FF:000004">
    <property type="entry name" value="Glutamine synthetase"/>
    <property type="match status" value="1"/>
</dbReference>
<dbReference type="FunFam" id="3.30.590.10:FF:000011">
    <property type="entry name" value="Glutamine synthetase"/>
    <property type="match status" value="1"/>
</dbReference>
<dbReference type="Gene3D" id="3.10.20.70">
    <property type="entry name" value="Glutamine synthetase, N-terminal domain"/>
    <property type="match status" value="1"/>
</dbReference>
<dbReference type="Gene3D" id="3.30.590.10">
    <property type="entry name" value="Glutamine synthetase/guanido kinase, catalytic domain"/>
    <property type="match status" value="1"/>
</dbReference>
<dbReference type="InterPro" id="IPR008147">
    <property type="entry name" value="Gln_synt_N"/>
</dbReference>
<dbReference type="InterPro" id="IPR036651">
    <property type="entry name" value="Gln_synt_N_sf"/>
</dbReference>
<dbReference type="InterPro" id="IPR014746">
    <property type="entry name" value="Gln_synth/guanido_kin_cat_dom"/>
</dbReference>
<dbReference type="InterPro" id="IPR008146">
    <property type="entry name" value="Gln_synth_cat_dom"/>
</dbReference>
<dbReference type="InterPro" id="IPR027303">
    <property type="entry name" value="Gln_synth_gly_rich_site"/>
</dbReference>
<dbReference type="InterPro" id="IPR027302">
    <property type="entry name" value="Gln_synth_N_conserv_site"/>
</dbReference>
<dbReference type="InterPro" id="IPR050292">
    <property type="entry name" value="Glutamine_Synthetase"/>
</dbReference>
<dbReference type="PANTHER" id="PTHR20852">
    <property type="entry name" value="GLUTAMINE SYNTHETASE"/>
    <property type="match status" value="1"/>
</dbReference>
<dbReference type="PANTHER" id="PTHR20852:SF45">
    <property type="entry name" value="GLUTAMINE SYNTHETASE"/>
    <property type="match status" value="1"/>
</dbReference>
<dbReference type="Pfam" id="PF00120">
    <property type="entry name" value="Gln-synt_C"/>
    <property type="match status" value="1"/>
</dbReference>
<dbReference type="Pfam" id="PF03951">
    <property type="entry name" value="Gln-synt_N"/>
    <property type="match status" value="1"/>
</dbReference>
<dbReference type="SMART" id="SM01230">
    <property type="entry name" value="Gln-synt_C"/>
    <property type="match status" value="1"/>
</dbReference>
<dbReference type="SUPFAM" id="SSF54368">
    <property type="entry name" value="Glutamine synthetase, N-terminal domain"/>
    <property type="match status" value="1"/>
</dbReference>
<dbReference type="SUPFAM" id="SSF55931">
    <property type="entry name" value="Glutamine synthetase/guanido kinase"/>
    <property type="match status" value="1"/>
</dbReference>
<dbReference type="PROSITE" id="PS00180">
    <property type="entry name" value="GLNA_1"/>
    <property type="match status" value="1"/>
</dbReference>
<dbReference type="PROSITE" id="PS00181">
    <property type="entry name" value="GLNA_ATP"/>
    <property type="match status" value="1"/>
</dbReference>
<dbReference type="PROSITE" id="PS51986">
    <property type="entry name" value="GS_BETA_GRASP"/>
    <property type="match status" value="1"/>
</dbReference>
<dbReference type="PROSITE" id="PS51987">
    <property type="entry name" value="GS_CATALYTIC"/>
    <property type="match status" value="1"/>
</dbReference>
<accession>P04773</accession>
<accession>Q9EQP8</accession>
<keyword id="KW-0007">Acetylation</keyword>
<keyword id="KW-0037">Angiogenesis</keyword>
<keyword id="KW-0067">ATP-binding</keyword>
<keyword id="KW-1003">Cell membrane</keyword>
<keyword id="KW-0963">Cytoplasm</keyword>
<keyword id="KW-0256">Endoplasmic reticulum</keyword>
<keyword id="KW-0436">Ligase</keyword>
<keyword id="KW-0449">Lipoprotein</keyword>
<keyword id="KW-0460">Magnesium</keyword>
<keyword id="KW-0464">Manganese</keyword>
<keyword id="KW-0472">Membrane</keyword>
<keyword id="KW-0479">Metal-binding</keyword>
<keyword id="KW-0492">Microsome</keyword>
<keyword id="KW-0496">Mitochondrion</keyword>
<keyword id="KW-0547">Nucleotide-binding</keyword>
<keyword id="KW-0564">Palmitate</keyword>
<keyword id="KW-0597">Phosphoprotein</keyword>
<keyword id="KW-0808">Transferase</keyword>
<keyword id="KW-0832">Ubl conjugation</keyword>
<sequence>MATSASSHLNKGIKQMYMSLPQGEKVQAMYIWVDGTGEGLRCKTRTLDCEPKCVEELPEWNFDGSSTFQSESSNSDMYLSPVAMFRDPFRKEPNKLVFCEVFKYNQKPAETNLRHTCKRIMDMVSNQHPWFGMEQEYTLLGTDGHPFGWPSDGFPGPQGLYYCGVGADKAYRRDIMEAHYRACLYAGVKITGTYAEVKHAQWEFQIGPCEGIRMGDHLWVARFILHRVCKDFGVIATFDSKPIPGNWNGAGCHTNFSTKTMREENGLKHIKEAIEKLSKRHRYHIRAYDPKGGLDNARRLTGFHKTSNINDFSAGVADRSASIRIPRTVGQEKKGYFEARCPSANCDPFAVTEAIVRTCLLNETGDQPFQYKN</sequence>
<protein>
    <recommendedName>
        <fullName evidence="7">Glutamine synthetase</fullName>
        <shortName evidence="7">GS</shortName>
        <ecNumber evidence="2">6.3.1.2</ecNumber>
    </recommendedName>
    <alternativeName>
        <fullName evidence="8">Glutamate--ammonia ligase</fullName>
    </alternativeName>
    <alternativeName>
        <fullName evidence="8">Palmitoyltransferase GLUL</fullName>
        <ecNumber evidence="2">2.3.1.225</ecNumber>
    </alternativeName>
</protein>
<name>GLNA_CRIGR</name>
<gene>
    <name evidence="2" type="primary">GLUL</name>
</gene>